<dbReference type="EC" id="3.2.1.20"/>
<dbReference type="EMBL" id="AJ001089">
    <property type="protein sequence ID" value="CAA04524.1"/>
    <property type="molecule type" value="Genomic_DNA"/>
</dbReference>
<dbReference type="EMBL" id="AE000512">
    <property type="protein sequence ID" value="AAD36897.1"/>
    <property type="molecule type" value="Genomic_DNA"/>
</dbReference>
<dbReference type="PIR" id="F72205">
    <property type="entry name" value="F72205"/>
</dbReference>
<dbReference type="RefSeq" id="NP_229631.1">
    <property type="nucleotide sequence ID" value="NC_000853.1"/>
</dbReference>
<dbReference type="RefSeq" id="WP_010865414.1">
    <property type="nucleotide sequence ID" value="NC_000853.1"/>
</dbReference>
<dbReference type="PDB" id="1OBB">
    <property type="method" value="X-ray"/>
    <property type="resolution" value="1.90 A"/>
    <property type="chains" value="A/B=1-480"/>
</dbReference>
<dbReference type="PDBsum" id="1OBB"/>
<dbReference type="SMR" id="O33830"/>
<dbReference type="FunCoup" id="O33830">
    <property type="interactions" value="34"/>
</dbReference>
<dbReference type="STRING" id="243274.TM_1834"/>
<dbReference type="DrugBank" id="DB03323">
    <property type="generic name" value="Maltose"/>
</dbReference>
<dbReference type="CAZy" id="GH4">
    <property type="family name" value="Glycoside Hydrolase Family 4"/>
</dbReference>
<dbReference type="PaxDb" id="243274-THEMA_05030"/>
<dbReference type="EnsemblBacteria" id="AAD36897">
    <property type="protein sequence ID" value="AAD36897"/>
    <property type="gene ID" value="TM_1834"/>
</dbReference>
<dbReference type="KEGG" id="tma:TM1834"/>
<dbReference type="KEGG" id="tmi:THEMA_05030"/>
<dbReference type="KEGG" id="tmm:Tmari_1843"/>
<dbReference type="KEGG" id="tmw:THMA_1878"/>
<dbReference type="eggNOG" id="COG1486">
    <property type="taxonomic scope" value="Bacteria"/>
</dbReference>
<dbReference type="InParanoid" id="O33830"/>
<dbReference type="OrthoDB" id="9808275at2"/>
<dbReference type="BRENDA" id="3.2.1.20">
    <property type="organism ID" value="6331"/>
</dbReference>
<dbReference type="SABIO-RK" id="O33830"/>
<dbReference type="EvolutionaryTrace" id="O33830"/>
<dbReference type="Proteomes" id="UP000008183">
    <property type="component" value="Chromosome"/>
</dbReference>
<dbReference type="GO" id="GO:0005829">
    <property type="term" value="C:cytosol"/>
    <property type="evidence" value="ECO:0000318"/>
    <property type="project" value="GO_Central"/>
</dbReference>
<dbReference type="GO" id="GO:0004558">
    <property type="term" value="F:alpha-1,4-glucosidase activity"/>
    <property type="evidence" value="ECO:0007669"/>
    <property type="project" value="UniProtKB-EC"/>
</dbReference>
<dbReference type="GO" id="GO:0004553">
    <property type="term" value="F:hydrolase activity, hydrolyzing O-glycosyl compounds"/>
    <property type="evidence" value="ECO:0000318"/>
    <property type="project" value="GO_Central"/>
</dbReference>
<dbReference type="GO" id="GO:0046872">
    <property type="term" value="F:metal ion binding"/>
    <property type="evidence" value="ECO:0007669"/>
    <property type="project" value="UniProtKB-KW"/>
</dbReference>
<dbReference type="GO" id="GO:0016616">
    <property type="term" value="F:oxidoreductase activity, acting on the CH-OH group of donors, NAD or NADP as acceptor"/>
    <property type="evidence" value="ECO:0007669"/>
    <property type="project" value="InterPro"/>
</dbReference>
<dbReference type="GO" id="GO:0005975">
    <property type="term" value="P:carbohydrate metabolic process"/>
    <property type="evidence" value="ECO:0007669"/>
    <property type="project" value="InterPro"/>
</dbReference>
<dbReference type="CDD" id="cd05297">
    <property type="entry name" value="GH4_alpha_glucosidase_galactosidase"/>
    <property type="match status" value="1"/>
</dbReference>
<dbReference type="Gene3D" id="3.90.1820.10">
    <property type="entry name" value="AglA-like glucosidase"/>
    <property type="match status" value="1"/>
</dbReference>
<dbReference type="InterPro" id="IPR053487">
    <property type="entry name" value="Alpha-glycosidase"/>
</dbReference>
<dbReference type="InterPro" id="IPR053715">
    <property type="entry name" value="GH4_Enzyme_sf"/>
</dbReference>
<dbReference type="InterPro" id="IPR019802">
    <property type="entry name" value="GlycHydrolase_4_CS"/>
</dbReference>
<dbReference type="InterPro" id="IPR001088">
    <property type="entry name" value="Glyco_hydro_4"/>
</dbReference>
<dbReference type="InterPro" id="IPR022616">
    <property type="entry name" value="Glyco_hydro_4_C"/>
</dbReference>
<dbReference type="InterPro" id="IPR015955">
    <property type="entry name" value="Lactate_DH/Glyco_Ohase_4_C"/>
</dbReference>
<dbReference type="InterPro" id="IPR036291">
    <property type="entry name" value="NAD(P)-bd_dom_sf"/>
</dbReference>
<dbReference type="NCBIfam" id="NF041089">
    <property type="entry name" value="alpha_gluc_AglA"/>
    <property type="match status" value="1"/>
</dbReference>
<dbReference type="PANTHER" id="PTHR32092">
    <property type="entry name" value="6-PHOSPHO-BETA-GLUCOSIDASE-RELATED"/>
    <property type="match status" value="1"/>
</dbReference>
<dbReference type="PANTHER" id="PTHR32092:SF4">
    <property type="entry name" value="ALPHA-GLUCOSIDASE"/>
    <property type="match status" value="1"/>
</dbReference>
<dbReference type="Pfam" id="PF02056">
    <property type="entry name" value="Glyco_hydro_4"/>
    <property type="match status" value="1"/>
</dbReference>
<dbReference type="Pfam" id="PF11975">
    <property type="entry name" value="Glyco_hydro_4C"/>
    <property type="match status" value="1"/>
</dbReference>
<dbReference type="PRINTS" id="PR00732">
    <property type="entry name" value="GLHYDRLASE4"/>
</dbReference>
<dbReference type="SUPFAM" id="SSF56327">
    <property type="entry name" value="LDH C-terminal domain-like"/>
    <property type="match status" value="1"/>
</dbReference>
<dbReference type="SUPFAM" id="SSF51735">
    <property type="entry name" value="NAD(P)-binding Rossmann-fold domains"/>
    <property type="match status" value="1"/>
</dbReference>
<dbReference type="PROSITE" id="PS01324">
    <property type="entry name" value="GLYCOSYL_HYDROL_F4"/>
    <property type="match status" value="1"/>
</dbReference>
<sequence>MPSVKIGIIGAGSAVFSLRLVSDLCKTPGLSGSTVTLMDIDEERLDAILTIAKKYVEEVGADLKFEKTMNLDDVIIDADFVINTAMVGGHTYLEKVRQIGEKYGYYRGIDAQEFNMVSDYYTFSNYNQLKYFVDIARKIEKLSPKAWYLQAANPIFEGTTLVTRTVPIKAVGFCHGHYGVMEIVEKLGLEEEKVDWQVAGVNHGIWLNRFRYNGGNAYPLLDKWIEEKSKDWKPENPFNDQLSPAAIDMYRFYGVMPIGDTVRNSSWRYHRDLETKKKWYGEPWGGADSEIGWKWYQDTLGKVTEITKKVAKFIKENPSVRLSDLGSVLGKDLSEKQFVLEVEKILDPERKSGEQHIPFIDALLNDNKARFVVNIPNKGIIHGIDDDVVVEVPALVDKNGIHPEKIEPPLPDRVVKYYLRPRIMRMEMALEAFLTGDIRIIKELLYRDPRTKSDEQVEKVIEEILALPENEEMRKHYLKR</sequence>
<gene>
    <name type="primary">aglA</name>
    <name type="ordered locus">TM_1834</name>
</gene>
<name>AGLA_THEMA</name>
<accession>O33830</accession>
<proteinExistence type="evidence at protein level"/>
<protein>
    <recommendedName>
        <fullName>Alpha-glucosidase</fullName>
        <ecNumber>3.2.1.20</ecNumber>
    </recommendedName>
    <alternativeName>
        <fullName>Maltase</fullName>
    </alternativeName>
</protein>
<organism>
    <name type="scientific">Thermotoga maritima (strain ATCC 43589 / DSM 3109 / JCM 10099 / NBRC 100826 / MSB8)</name>
    <dbReference type="NCBI Taxonomy" id="243274"/>
    <lineage>
        <taxon>Bacteria</taxon>
        <taxon>Thermotogati</taxon>
        <taxon>Thermotogota</taxon>
        <taxon>Thermotogae</taxon>
        <taxon>Thermotogales</taxon>
        <taxon>Thermotogaceae</taxon>
        <taxon>Thermotoga</taxon>
    </lineage>
</organism>
<evidence type="ECO:0000250" key="1"/>
<evidence type="ECO:0000269" key="2">
    <source>
    </source>
</evidence>
<evidence type="ECO:0000269" key="3">
    <source>
    </source>
</evidence>
<evidence type="ECO:0000305" key="4"/>
<evidence type="ECO:0000305" key="5">
    <source>
    </source>
</evidence>
<evidence type="ECO:0007829" key="6">
    <source>
        <dbReference type="PDB" id="1OBB"/>
    </source>
</evidence>
<comment type="function">
    <text>Alpha-glycosidase with a very broad specificity. Hydrolyzes maltose and other small maltooligosaccharides but is inactive against the polymeric substrate starch. AglA is not specific with respect to the configuration at the C-4 position of its substrates because glycosidic derivatives of D-galactose are also hydrolyzed. Does not cleave beta-glycosidic bonds.</text>
</comment>
<comment type="catalytic activity">
    <reaction>
        <text>Hydrolysis of terminal, non-reducing (1-&gt;4)-linked alpha-D-glucose residues with release of alpha-D-glucose.</text>
        <dbReference type="EC" id="3.2.1.20"/>
    </reaction>
</comment>
<comment type="cofactor">
    <cofactor evidence="2">
        <name>NAD(+)</name>
        <dbReference type="ChEBI" id="CHEBI:57540"/>
    </cofactor>
    <text evidence="2">Binds 1 NAD(+) per subunit.</text>
</comment>
<comment type="cofactor">
    <cofactor evidence="2">
        <name>Mn(2+)</name>
        <dbReference type="ChEBI" id="CHEBI:29035"/>
    </cofactor>
    <cofactor evidence="2">
        <name>Co(2+)</name>
        <dbReference type="ChEBI" id="CHEBI:48828"/>
    </cofactor>
    <cofactor evidence="2">
        <name>Ni(2+)</name>
        <dbReference type="ChEBI" id="CHEBI:49786"/>
    </cofactor>
    <text evidence="2">Binds 1 Mn(2+) ion per subunit. Can also use Co(2+) and Ni(2+) ions, albeit less efficiently than manganese ion.</text>
</comment>
<comment type="activity regulation">
    <text>Inhibited by Hg(2+) ion and EDTA.</text>
</comment>
<comment type="biophysicochemical properties">
    <kinetics>
        <KM evidence="2 3">0.23 mM for p-nitrophenyl-alpha-D-glucopyranoside</KM>
        <KM evidence="2 3">0.53 mM for p-nitrophenyl-alpha-D-galactopyranoside</KM>
        <Vmax evidence="2 3">9.94 umol/min/mg enzyme with p-nitrophenyl-alpha-D-glucopyranoside as substrate</Vmax>
        <Vmax evidence="2 3">11.42 umol/min/mg enzyme with p-nitrophenyl-alpha-D-galactopyranoside as substrate</Vmax>
    </kinetics>
    <phDependence>
        <text evidence="2">Optimum pH is 7.5. Active from pH 6.5 to 9.</text>
    </phDependence>
    <temperatureDependence>
        <text evidence="2">Optimum temperature is 90 degrees Celsius. Active from 60 to 105 degrees Celsius. Highly thermostable.</text>
    </temperatureDependence>
</comment>
<comment type="subunit">
    <text evidence="2">Homodimer.</text>
</comment>
<comment type="similarity">
    <text evidence="4">Belongs to the glycosyl hydrolase 4 family.</text>
</comment>
<comment type="caution">
    <text evidence="5">In the crystal structure (PubMed:12588867), the metal ion is absent, probably due to the oxidation of the active site Cys-174 to sulfinic acid. In the absence of metal, positions of the coenzyme and the substrate and their interactions are all significantly altered, presumably accounting for the inactivity of this form.</text>
</comment>
<feature type="chain" id="PRO_0000169855" description="Alpha-glucosidase">
    <location>
        <begin position="1"/>
        <end position="480"/>
    </location>
</feature>
<feature type="active site" description="Proton donor" evidence="4">
    <location>
        <position position="175"/>
    </location>
</feature>
<feature type="active site" description="Proton acceptor" evidence="4">
    <location>
        <position position="260"/>
    </location>
</feature>
<feature type="binding site">
    <location>
        <begin position="4"/>
        <end position="70"/>
    </location>
    <ligand>
        <name>NAD(+)</name>
        <dbReference type="ChEBI" id="CHEBI:57540"/>
    </ligand>
</feature>
<feature type="binding site">
    <location>
        <position position="119"/>
    </location>
    <ligand>
        <name>substrate</name>
    </ligand>
</feature>
<feature type="binding site">
    <location>
        <position position="153"/>
    </location>
    <ligand>
        <name>substrate</name>
    </ligand>
</feature>
<feature type="binding site" evidence="1">
    <location>
        <position position="174"/>
    </location>
    <ligand>
        <name>Mn(2+)</name>
        <dbReference type="ChEBI" id="CHEBI:29035"/>
    </ligand>
</feature>
<feature type="binding site" evidence="1">
    <location>
        <position position="203"/>
    </location>
    <ligand>
        <name>Mn(2+)</name>
        <dbReference type="ChEBI" id="CHEBI:29035"/>
    </ligand>
</feature>
<feature type="mutagenesis site" description="Reduced activity. 300-fold reduction of the binding affinity for NAD(+). No change in substrate affinity." evidence="3">
    <original>G</original>
    <variation>A</variation>
    <location>
        <position position="10"/>
    </location>
</feature>
<feature type="mutagenesis site" description="No change in activity and substrate affinity. 5-fold reduction of the binding affinity for NAD(+)." evidence="3">
    <original>G</original>
    <variation>A</variation>
    <location>
        <position position="12"/>
    </location>
</feature>
<feature type="mutagenesis site" description="Highly reduced activity. 10-fold reduction of the binding affinity for NAD(+). No change in substrate affinity." evidence="3">
    <original>S</original>
    <variation>A</variation>
    <location>
        <position position="13"/>
    </location>
</feature>
<feature type="sequence conflict" description="In Ref. 1." evidence="4" ref="1">
    <location>
        <begin position="459"/>
        <end position="479"/>
    </location>
</feature>
<feature type="strand" evidence="6">
    <location>
        <begin position="5"/>
        <end position="9"/>
    </location>
</feature>
<feature type="turn" evidence="6">
    <location>
        <begin position="10"/>
        <end position="12"/>
    </location>
</feature>
<feature type="helix" evidence="6">
    <location>
        <begin position="14"/>
        <end position="25"/>
    </location>
</feature>
<feature type="helix" evidence="6">
    <location>
        <begin position="28"/>
        <end position="30"/>
    </location>
</feature>
<feature type="strand" evidence="6">
    <location>
        <begin position="34"/>
        <end position="38"/>
    </location>
</feature>
<feature type="helix" evidence="6">
    <location>
        <begin position="42"/>
        <end position="58"/>
    </location>
</feature>
<feature type="strand" evidence="6">
    <location>
        <begin position="64"/>
        <end position="69"/>
    </location>
</feature>
<feature type="helix" evidence="6">
    <location>
        <begin position="71"/>
        <end position="75"/>
    </location>
</feature>
<feature type="strand" evidence="6">
    <location>
        <begin position="79"/>
        <end position="83"/>
    </location>
</feature>
<feature type="helix" evidence="6">
    <location>
        <begin position="89"/>
        <end position="102"/>
    </location>
</feature>
<feature type="strand" evidence="6">
    <location>
        <begin position="122"/>
        <end position="124"/>
    </location>
</feature>
<feature type="helix" evidence="6">
    <location>
        <begin position="126"/>
        <end position="142"/>
    </location>
</feature>
<feature type="strand" evidence="6">
    <location>
        <begin position="147"/>
        <end position="150"/>
    </location>
</feature>
<feature type="helix" evidence="6">
    <location>
        <begin position="155"/>
        <end position="165"/>
    </location>
</feature>
<feature type="strand" evidence="6">
    <location>
        <begin position="168"/>
        <end position="173"/>
    </location>
</feature>
<feature type="helix" evidence="6">
    <location>
        <begin position="176"/>
        <end position="178"/>
    </location>
</feature>
<feature type="helix" evidence="6">
    <location>
        <begin position="179"/>
        <end position="186"/>
    </location>
</feature>
<feature type="helix" evidence="6">
    <location>
        <begin position="191"/>
        <end position="193"/>
    </location>
</feature>
<feature type="strand" evidence="6">
    <location>
        <begin position="194"/>
        <end position="201"/>
    </location>
</feature>
<feature type="strand" evidence="6">
    <location>
        <begin position="204"/>
        <end position="212"/>
    </location>
</feature>
<feature type="helix" evidence="6">
    <location>
        <begin position="218"/>
        <end position="227"/>
    </location>
</feature>
<feature type="helix" evidence="6">
    <location>
        <begin position="229"/>
        <end position="231"/>
    </location>
</feature>
<feature type="helix" evidence="6">
    <location>
        <begin position="244"/>
        <end position="253"/>
    </location>
</feature>
<feature type="helix" evidence="6">
    <location>
        <begin position="259"/>
        <end position="261"/>
    </location>
</feature>
<feature type="helix" evidence="6">
    <location>
        <begin position="267"/>
        <end position="270"/>
    </location>
</feature>
<feature type="helix" evidence="6">
    <location>
        <begin position="273"/>
        <end position="280"/>
    </location>
</feature>
<feature type="turn" evidence="6">
    <location>
        <begin position="282"/>
        <end position="285"/>
    </location>
</feature>
<feature type="helix" evidence="6">
    <location>
        <begin position="290"/>
        <end position="316"/>
    </location>
</feature>
<feature type="helix" evidence="6">
    <location>
        <begin position="322"/>
        <end position="324"/>
    </location>
</feature>
<feature type="strand" evidence="6">
    <location>
        <begin position="326"/>
        <end position="329"/>
    </location>
</feature>
<feature type="helix" evidence="6">
    <location>
        <begin position="333"/>
        <end position="346"/>
    </location>
</feature>
<feature type="helix" evidence="6">
    <location>
        <begin position="356"/>
        <end position="365"/>
    </location>
</feature>
<feature type="strand" evidence="6">
    <location>
        <begin position="369"/>
        <end position="376"/>
    </location>
</feature>
<feature type="strand" evidence="6">
    <location>
        <begin position="388"/>
        <end position="397"/>
    </location>
</feature>
<feature type="strand" evidence="6">
    <location>
        <begin position="400"/>
        <end position="403"/>
    </location>
</feature>
<feature type="helix" evidence="6">
    <location>
        <begin position="412"/>
        <end position="417"/>
    </location>
</feature>
<feature type="helix" evidence="6">
    <location>
        <begin position="419"/>
        <end position="435"/>
    </location>
</feature>
<feature type="helix" evidence="6">
    <location>
        <begin position="438"/>
        <end position="446"/>
    </location>
</feature>
<feature type="helix" evidence="6">
    <location>
        <begin position="454"/>
        <end position="465"/>
    </location>
</feature>
<feature type="helix" evidence="6">
    <location>
        <begin position="468"/>
        <end position="470"/>
    </location>
</feature>
<feature type="helix" evidence="6">
    <location>
        <begin position="471"/>
        <end position="477"/>
    </location>
</feature>
<keyword id="KW-0002">3D-structure</keyword>
<keyword id="KW-0119">Carbohydrate metabolism</keyword>
<keyword id="KW-0170">Cobalt</keyword>
<keyword id="KW-0326">Glycosidase</keyword>
<keyword id="KW-0378">Hydrolase</keyword>
<keyword id="KW-0464">Manganese</keyword>
<keyword id="KW-0479">Metal-binding</keyword>
<keyword id="KW-0520">NAD</keyword>
<keyword id="KW-0533">Nickel</keyword>
<keyword id="KW-1185">Reference proteome</keyword>
<reference key="1">
    <citation type="journal article" date="1998" name="FEMS Microbiol. Lett.">
        <title>Isolation and analysis of genes for amylolytic enzymes of the hyperthermophilic bacterium Thermotoga maritima.</title>
        <authorList>
            <person name="Bibel M."/>
            <person name="Brettl C."/>
            <person name="Gosslar U."/>
            <person name="Kriegshaeuser G."/>
            <person name="Liebl W."/>
        </authorList>
    </citation>
    <scope>NUCLEOTIDE SEQUENCE [GENOMIC DNA]</scope>
    <source>
        <strain>ATCC 43589 / DSM 3109 / JCM 10099 / NBRC 100826 / MSB8</strain>
    </source>
</reference>
<reference key="2">
    <citation type="journal article" date="1999" name="Nature">
        <title>Evidence for lateral gene transfer between Archaea and Bacteria from genome sequence of Thermotoga maritima.</title>
        <authorList>
            <person name="Nelson K.E."/>
            <person name="Clayton R.A."/>
            <person name="Gill S.R."/>
            <person name="Gwinn M.L."/>
            <person name="Dodson R.J."/>
            <person name="Haft D.H."/>
            <person name="Hickey E.K."/>
            <person name="Peterson J.D."/>
            <person name="Nelson W.C."/>
            <person name="Ketchum K.A."/>
            <person name="McDonald L.A."/>
            <person name="Utterback T.R."/>
            <person name="Malek J.A."/>
            <person name="Linher K.D."/>
            <person name="Garrett M.M."/>
            <person name="Stewart A.M."/>
            <person name="Cotton M.D."/>
            <person name="Pratt M.S."/>
            <person name="Phillips C.A."/>
            <person name="Richardson D.L."/>
            <person name="Heidelberg J.F."/>
            <person name="Sutton G.G."/>
            <person name="Fleischmann R.D."/>
            <person name="Eisen J.A."/>
            <person name="White O."/>
            <person name="Salzberg S.L."/>
            <person name="Smith H.O."/>
            <person name="Venter J.C."/>
            <person name="Fraser C.M."/>
        </authorList>
    </citation>
    <scope>NUCLEOTIDE SEQUENCE [LARGE SCALE GENOMIC DNA]</scope>
    <source>
        <strain>ATCC 43589 / DSM 3109 / JCM 10099 / NBRC 100826 / MSB8</strain>
    </source>
</reference>
<reference key="3">
    <citation type="journal article" date="2000" name="Extremophiles">
        <title>Thermotoga maritima AglA, an extremely thermostable NAD+-, Mn2+-, and thiol-dependent alpha-glucosidase.</title>
        <authorList>
            <person name="Raasch C."/>
            <person name="Streit W."/>
            <person name="Schanzer J."/>
            <person name="Bibel M."/>
            <person name="Gosslar U."/>
            <person name="Liebl W."/>
        </authorList>
    </citation>
    <scope>CHARACTERIZATION</scope>
    <scope>SUBUNIT</scope>
    <scope>COFACTOR</scope>
    <scope>BIOPHYSICOCHEMICAL PROPERTIES</scope>
    <source>
        <strain>ATCC 43589 / DSM 3109 / JCM 10099 / NBRC 100826 / MSB8</strain>
    </source>
</reference>
<reference key="4">
    <citation type="journal article" date="2002" name="FEBS Lett.">
        <title>Identification of residues important for NAD+ binding by the Thermotoga maritima alpha-glucosidase AglA, a member of glycoside hydrolase family 4.</title>
        <authorList>
            <person name="Raasch C."/>
            <person name="Armbrecht M."/>
            <person name="Streit W."/>
            <person name="Hoecker B."/>
            <person name="Straeter N."/>
            <person name="Liebl W."/>
        </authorList>
    </citation>
    <scope>MUTAGENESIS OF GLY-10; GLY-12 AND SER-13</scope>
    <scope>KINETIC PARAMETERS</scope>
</reference>
<reference key="5">
    <citation type="journal article" date="2003" name="J. Biol. Chem.">
        <title>Crystal structure of Thermotoga maritima alpha-glucosidase AglA defines a new clan of NAD+-dependent glycosidases.</title>
        <authorList>
            <person name="Lodge J.A."/>
            <person name="Maier T."/>
            <person name="Liebl W."/>
            <person name="Hoffmann V."/>
            <person name="Straeter N."/>
        </authorList>
    </citation>
    <scope>X-RAY CRYSTALLOGRAPHY (1.9 ANGSTROMS) OF COMPLEX WITH NAD(+) AND MALTOSE</scope>
</reference>